<comment type="function">
    <text evidence="1">RuBisCO catalyzes two reactions: the carboxylation of D-ribulose 1,5-bisphosphate, the primary event in carbon dioxide fixation, as well as the oxidative fragmentation of the pentose substrate in the photorespiration process. Both reactions occur simultaneously and in competition at the same active site.</text>
</comment>
<comment type="catalytic activity">
    <reaction evidence="1">
        <text>2 (2R)-3-phosphoglycerate + 2 H(+) = D-ribulose 1,5-bisphosphate + CO2 + H2O</text>
        <dbReference type="Rhea" id="RHEA:23124"/>
        <dbReference type="ChEBI" id="CHEBI:15377"/>
        <dbReference type="ChEBI" id="CHEBI:15378"/>
        <dbReference type="ChEBI" id="CHEBI:16526"/>
        <dbReference type="ChEBI" id="CHEBI:57870"/>
        <dbReference type="ChEBI" id="CHEBI:58272"/>
        <dbReference type="EC" id="4.1.1.39"/>
    </reaction>
</comment>
<comment type="catalytic activity">
    <reaction evidence="1">
        <text>D-ribulose 1,5-bisphosphate + O2 = 2-phosphoglycolate + (2R)-3-phosphoglycerate + 2 H(+)</text>
        <dbReference type="Rhea" id="RHEA:36631"/>
        <dbReference type="ChEBI" id="CHEBI:15378"/>
        <dbReference type="ChEBI" id="CHEBI:15379"/>
        <dbReference type="ChEBI" id="CHEBI:57870"/>
        <dbReference type="ChEBI" id="CHEBI:58033"/>
        <dbReference type="ChEBI" id="CHEBI:58272"/>
    </reaction>
</comment>
<comment type="cofactor">
    <cofactor evidence="1">
        <name>Mg(2+)</name>
        <dbReference type="ChEBI" id="CHEBI:18420"/>
    </cofactor>
    <text evidence="1">Binds 1 Mg(2+) ion per subunit.</text>
</comment>
<comment type="subunit">
    <text evidence="1">Heterohexadecamer of 8 large chains and 8 small chains; disulfide-linked. The disulfide link is formed within the large subunit homodimers.</text>
</comment>
<comment type="subcellular location">
    <subcellularLocation>
        <location>Plastid</location>
        <location>Chloroplast</location>
    </subcellularLocation>
</comment>
<comment type="PTM">
    <text evidence="1">The disulfide bond which can form in the large chain dimeric partners within the hexadecamer appears to be associated with oxidative stress and protein turnover.</text>
</comment>
<comment type="miscellaneous">
    <text evidence="1">The basic functional RuBisCO is composed of a large chain homodimer in a 'head-to-tail' conformation. In form I RuBisCO this homodimer is arranged in a barrel-like tetramer with the small subunits forming a tetrameric 'cap' on each end of the 'barrel'.</text>
</comment>
<comment type="similarity">
    <text evidence="1">Belongs to the RuBisCO large chain family. Type I subfamily.</text>
</comment>
<gene>
    <name evidence="1" type="primary">rbcL</name>
</gene>
<sequence length="466" mass="51716">SVGFKAGVKEYKLTYYTPDYETQDTDILAAFRVTPQPGVPPEEAGAAVAAESSTGTWTTVWTDGLTSLDRYKGRCYHIEPVAGEDNQYIVYVAYPLDLFEEGSVTNMFTSIVGNVFGFKALRALRLEDLRVPPAYSKTFQGPPHGIQVERDKLNKYGRPLLGCTIKPKLGLSAKNYGRAVYECLRGGLDFTKDDENVNSQPFMRWRDRFLFCAEAIYKAQAETGEIKGHYLNATAGTCEEMTKRADFAYELGVPIIMHDYLTGGFTANTSLALYCRNHGLLLHIHRAMHAVIDRQKNHGIHFRVLAKALRLSGGDHIHAGTVVGKLEGERDITLGFVVLLRDDYLEKDRSRGIYFTQFWVSLPGVLPVASGGIHVWHMPALTEIFGDDSVLQFGGGTLGHPWGNAPGAVANRVALEACVQARNEGRDLAREGNEIIRKASKWSPELSAACEVWKEIKLYFEAVDTL</sequence>
<dbReference type="EC" id="4.1.1.39" evidence="1"/>
<dbReference type="EMBL" id="L01906">
    <property type="protein sequence ID" value="AAA16232.2"/>
    <property type="molecule type" value="Genomic_DNA"/>
</dbReference>
<dbReference type="SMR" id="P28403"/>
<dbReference type="GO" id="GO:0009507">
    <property type="term" value="C:chloroplast"/>
    <property type="evidence" value="ECO:0007669"/>
    <property type="project" value="UniProtKB-SubCell"/>
</dbReference>
<dbReference type="GO" id="GO:0000287">
    <property type="term" value="F:magnesium ion binding"/>
    <property type="evidence" value="ECO:0007669"/>
    <property type="project" value="InterPro"/>
</dbReference>
<dbReference type="GO" id="GO:0004497">
    <property type="term" value="F:monooxygenase activity"/>
    <property type="evidence" value="ECO:0007669"/>
    <property type="project" value="UniProtKB-KW"/>
</dbReference>
<dbReference type="GO" id="GO:0016984">
    <property type="term" value="F:ribulose-bisphosphate carboxylase activity"/>
    <property type="evidence" value="ECO:0007669"/>
    <property type="project" value="UniProtKB-EC"/>
</dbReference>
<dbReference type="GO" id="GO:0009853">
    <property type="term" value="P:photorespiration"/>
    <property type="evidence" value="ECO:0007669"/>
    <property type="project" value="UniProtKB-KW"/>
</dbReference>
<dbReference type="GO" id="GO:0019253">
    <property type="term" value="P:reductive pentose-phosphate cycle"/>
    <property type="evidence" value="ECO:0007669"/>
    <property type="project" value="UniProtKB-KW"/>
</dbReference>
<dbReference type="CDD" id="cd08212">
    <property type="entry name" value="RuBisCO_large_I"/>
    <property type="match status" value="1"/>
</dbReference>
<dbReference type="FunFam" id="3.20.20.110:FF:000001">
    <property type="entry name" value="Ribulose bisphosphate carboxylase large chain"/>
    <property type="match status" value="1"/>
</dbReference>
<dbReference type="FunFam" id="3.30.70.150:FF:000001">
    <property type="entry name" value="Ribulose bisphosphate carboxylase large chain"/>
    <property type="match status" value="1"/>
</dbReference>
<dbReference type="Gene3D" id="3.20.20.110">
    <property type="entry name" value="Ribulose bisphosphate carboxylase, large subunit, C-terminal domain"/>
    <property type="match status" value="1"/>
</dbReference>
<dbReference type="Gene3D" id="3.30.70.150">
    <property type="entry name" value="RuBisCO large subunit, N-terminal domain"/>
    <property type="match status" value="1"/>
</dbReference>
<dbReference type="HAMAP" id="MF_01338">
    <property type="entry name" value="RuBisCO_L_type1"/>
    <property type="match status" value="1"/>
</dbReference>
<dbReference type="InterPro" id="IPR033966">
    <property type="entry name" value="RuBisCO"/>
</dbReference>
<dbReference type="InterPro" id="IPR020878">
    <property type="entry name" value="RuBisCo_large_chain_AS"/>
</dbReference>
<dbReference type="InterPro" id="IPR000685">
    <property type="entry name" value="RuBisCO_lsu_C"/>
</dbReference>
<dbReference type="InterPro" id="IPR036376">
    <property type="entry name" value="RuBisCO_lsu_C_sf"/>
</dbReference>
<dbReference type="InterPro" id="IPR017443">
    <property type="entry name" value="RuBisCO_lsu_fd_N"/>
</dbReference>
<dbReference type="InterPro" id="IPR036422">
    <property type="entry name" value="RuBisCO_lsu_N_sf"/>
</dbReference>
<dbReference type="InterPro" id="IPR020888">
    <property type="entry name" value="RuBisCO_lsuI"/>
</dbReference>
<dbReference type="NCBIfam" id="NF003252">
    <property type="entry name" value="PRK04208.1"/>
    <property type="match status" value="1"/>
</dbReference>
<dbReference type="PANTHER" id="PTHR42704">
    <property type="entry name" value="RIBULOSE BISPHOSPHATE CARBOXYLASE"/>
    <property type="match status" value="1"/>
</dbReference>
<dbReference type="PANTHER" id="PTHR42704:SF15">
    <property type="entry name" value="RIBULOSE BISPHOSPHATE CARBOXYLASE LARGE CHAIN"/>
    <property type="match status" value="1"/>
</dbReference>
<dbReference type="Pfam" id="PF00016">
    <property type="entry name" value="RuBisCO_large"/>
    <property type="match status" value="1"/>
</dbReference>
<dbReference type="Pfam" id="PF02788">
    <property type="entry name" value="RuBisCO_large_N"/>
    <property type="match status" value="1"/>
</dbReference>
<dbReference type="SFLD" id="SFLDG01052">
    <property type="entry name" value="RuBisCO"/>
    <property type="match status" value="1"/>
</dbReference>
<dbReference type="SFLD" id="SFLDS00014">
    <property type="entry name" value="RuBisCO"/>
    <property type="match status" value="1"/>
</dbReference>
<dbReference type="SFLD" id="SFLDG00301">
    <property type="entry name" value="RuBisCO-like_proteins"/>
    <property type="match status" value="1"/>
</dbReference>
<dbReference type="SUPFAM" id="SSF51649">
    <property type="entry name" value="RuBisCo, C-terminal domain"/>
    <property type="match status" value="1"/>
</dbReference>
<dbReference type="SUPFAM" id="SSF54966">
    <property type="entry name" value="RuBisCO, large subunit, small (N-terminal) domain"/>
    <property type="match status" value="1"/>
</dbReference>
<dbReference type="PROSITE" id="PS00157">
    <property type="entry name" value="RUBISCO_LARGE"/>
    <property type="match status" value="1"/>
</dbReference>
<organism>
    <name type="scientific">Drosera binata</name>
    <name type="common">Fork-leaved sundew</name>
    <name type="synonym">Dismophyla binata</name>
    <dbReference type="NCBI Taxonomy" id="4364"/>
    <lineage>
        <taxon>Eukaryota</taxon>
        <taxon>Viridiplantae</taxon>
        <taxon>Streptophyta</taxon>
        <taxon>Embryophyta</taxon>
        <taxon>Tracheophyta</taxon>
        <taxon>Spermatophyta</taxon>
        <taxon>Magnoliopsida</taxon>
        <taxon>eudicotyledons</taxon>
        <taxon>Gunneridae</taxon>
        <taxon>Pentapetalae</taxon>
        <taxon>Caryophyllales</taxon>
        <taxon>Droseraceae</taxon>
        <taxon>Drosera</taxon>
    </lineage>
</organism>
<geneLocation type="chloroplast"/>
<protein>
    <recommendedName>
        <fullName evidence="1">Ribulose bisphosphate carboxylase large chain</fullName>
        <shortName evidence="1">RuBisCO large subunit</shortName>
        <ecNumber evidence="1">4.1.1.39</ecNumber>
    </recommendedName>
</protein>
<reference key="1">
    <citation type="journal article" date="1992" name="Science">
        <title>Carnivorous plants: phylogeny and structural evolution.</title>
        <authorList>
            <person name="Albert V.A."/>
            <person name="Williams S.E."/>
            <person name="Chase M.W."/>
        </authorList>
    </citation>
    <scope>NUCLEOTIDE SEQUENCE [GENOMIC DNA]</scope>
</reference>
<name>RBL_DROBI</name>
<feature type="chain" id="PRO_0000062446" description="Ribulose bisphosphate carboxylase large chain">
    <location>
        <begin position="1" status="less than"/>
        <end position="466"/>
    </location>
</feature>
<feature type="active site" description="Proton acceptor" evidence="1">
    <location>
        <position position="166"/>
    </location>
</feature>
<feature type="active site" description="Proton acceptor" evidence="1">
    <location>
        <position position="285"/>
    </location>
</feature>
<feature type="binding site" description="in homodimeric partner" evidence="1">
    <location>
        <position position="114"/>
    </location>
    <ligand>
        <name>substrate</name>
    </ligand>
</feature>
<feature type="binding site" evidence="1">
    <location>
        <position position="164"/>
    </location>
    <ligand>
        <name>substrate</name>
    </ligand>
</feature>
<feature type="binding site" evidence="1">
    <location>
        <position position="168"/>
    </location>
    <ligand>
        <name>substrate</name>
    </ligand>
</feature>
<feature type="binding site" description="via carbamate group" evidence="1">
    <location>
        <position position="192"/>
    </location>
    <ligand>
        <name>Mg(2+)</name>
        <dbReference type="ChEBI" id="CHEBI:18420"/>
    </ligand>
</feature>
<feature type="binding site" evidence="1">
    <location>
        <position position="194"/>
    </location>
    <ligand>
        <name>Mg(2+)</name>
        <dbReference type="ChEBI" id="CHEBI:18420"/>
    </ligand>
</feature>
<feature type="binding site" evidence="1">
    <location>
        <position position="195"/>
    </location>
    <ligand>
        <name>Mg(2+)</name>
        <dbReference type="ChEBI" id="CHEBI:18420"/>
    </ligand>
</feature>
<feature type="binding site" evidence="1">
    <location>
        <position position="286"/>
    </location>
    <ligand>
        <name>substrate</name>
    </ligand>
</feature>
<feature type="binding site" evidence="1">
    <location>
        <position position="318"/>
    </location>
    <ligand>
        <name>substrate</name>
    </ligand>
</feature>
<feature type="binding site" evidence="1">
    <location>
        <position position="370"/>
    </location>
    <ligand>
        <name>substrate</name>
    </ligand>
</feature>
<feature type="site" description="Transition state stabilizer" evidence="1">
    <location>
        <position position="325"/>
    </location>
</feature>
<feature type="modified residue" description="N6,N6,N6-trimethyllysine" evidence="1">
    <location>
        <position position="5"/>
    </location>
</feature>
<feature type="modified residue" description="N6-carboxylysine" evidence="1">
    <location>
        <position position="192"/>
    </location>
</feature>
<feature type="disulfide bond" description="Interchain; in linked form" evidence="1">
    <location>
        <position position="238"/>
    </location>
</feature>
<feature type="non-terminal residue">
    <location>
        <position position="1"/>
    </location>
</feature>
<keyword id="KW-0113">Calvin cycle</keyword>
<keyword id="KW-0120">Carbon dioxide fixation</keyword>
<keyword id="KW-0150">Chloroplast</keyword>
<keyword id="KW-1015">Disulfide bond</keyword>
<keyword id="KW-0456">Lyase</keyword>
<keyword id="KW-0460">Magnesium</keyword>
<keyword id="KW-0479">Metal-binding</keyword>
<keyword id="KW-0488">Methylation</keyword>
<keyword id="KW-0503">Monooxygenase</keyword>
<keyword id="KW-0560">Oxidoreductase</keyword>
<keyword id="KW-0601">Photorespiration</keyword>
<keyword id="KW-0602">Photosynthesis</keyword>
<keyword id="KW-0934">Plastid</keyword>
<evidence type="ECO:0000255" key="1">
    <source>
        <dbReference type="HAMAP-Rule" id="MF_01338"/>
    </source>
</evidence>
<proteinExistence type="inferred from homology"/>
<accession>P28403</accession>